<protein>
    <recommendedName>
        <fullName evidence="8">Volume-regulated anion channel subunit LRRC8B</fullName>
    </recommendedName>
    <alternativeName>
        <fullName evidence="7">Leucine-rich repeat-containing protein 8B</fullName>
    </alternativeName>
</protein>
<gene>
    <name evidence="7 11" type="primary">Lrrc8b</name>
    <name evidence="9" type="synonym">Kiaa0231</name>
</gene>
<feature type="chain" id="PRO_0000076246" description="Volume-regulated anion channel subunit LRRC8B">
    <location>
        <begin position="1"/>
        <end position="803"/>
    </location>
</feature>
<feature type="topological domain" description="Cytoplasmic" evidence="10">
    <location>
        <begin position="1"/>
        <end position="25"/>
    </location>
</feature>
<feature type="transmembrane region" description="Helical; Name=1" evidence="4">
    <location>
        <begin position="26"/>
        <end position="46"/>
    </location>
</feature>
<feature type="topological domain" description="Extracellular" evidence="10">
    <location>
        <begin position="47"/>
        <end position="119"/>
    </location>
</feature>
<feature type="transmembrane region" description="Helical; Name=2" evidence="4">
    <location>
        <begin position="120"/>
        <end position="140"/>
    </location>
</feature>
<feature type="topological domain" description="Cytoplasmic" evidence="10">
    <location>
        <begin position="141"/>
        <end position="261"/>
    </location>
</feature>
<feature type="transmembrane region" description="Helical; Name=3" evidence="4">
    <location>
        <begin position="262"/>
        <end position="282"/>
    </location>
</feature>
<feature type="topological domain" description="Extracellular" evidence="10">
    <location>
        <begin position="283"/>
        <end position="307"/>
    </location>
</feature>
<feature type="transmembrane region" description="Helical; Name=4" evidence="4">
    <location>
        <begin position="308"/>
        <end position="328"/>
    </location>
</feature>
<feature type="topological domain" description="Cytoplasmic" evidence="10">
    <location>
        <begin position="329"/>
        <end position="803"/>
    </location>
</feature>
<feature type="repeat" description="LRR 1">
    <location>
        <begin position="415"/>
        <end position="439"/>
    </location>
</feature>
<feature type="repeat" description="LRR 2">
    <location>
        <begin position="440"/>
        <end position="462"/>
    </location>
</feature>
<feature type="repeat" description="LRR 3">
    <location>
        <begin position="464"/>
        <end position="486"/>
    </location>
</feature>
<feature type="repeat" description="LRR 4">
    <location>
        <begin position="488"/>
        <end position="509"/>
    </location>
</feature>
<feature type="repeat" description="LRR 5">
    <location>
        <begin position="511"/>
        <end position="532"/>
    </location>
</feature>
<feature type="repeat" description="LRR 6">
    <location>
        <begin position="539"/>
        <end position="559"/>
    </location>
</feature>
<feature type="repeat" description="LRR 7">
    <location>
        <begin position="562"/>
        <end position="582"/>
    </location>
</feature>
<feature type="repeat" description="LRR 8">
    <location>
        <begin position="586"/>
        <end position="607"/>
    </location>
</feature>
<feature type="repeat" description="LRR 9">
    <location>
        <begin position="609"/>
        <end position="630"/>
    </location>
</feature>
<feature type="repeat" description="LRR 10">
    <location>
        <begin position="634"/>
        <end position="655"/>
    </location>
</feature>
<feature type="repeat" description="LRR 11">
    <location>
        <begin position="657"/>
        <end position="678"/>
    </location>
</feature>
<feature type="repeat" description="LRR 12">
    <location>
        <begin position="680"/>
        <end position="701"/>
    </location>
</feature>
<feature type="repeat" description="LRR 13">
    <location>
        <begin position="703"/>
        <end position="724"/>
    </location>
</feature>
<feature type="repeat" description="LRR 14">
    <location>
        <begin position="726"/>
        <end position="747"/>
    </location>
</feature>
<feature type="repeat" description="LRR 15">
    <location>
        <begin position="749"/>
        <end position="771"/>
    </location>
</feature>
<feature type="modified residue" description="Phosphoserine" evidence="12">
    <location>
        <position position="186"/>
    </location>
</feature>
<feature type="modified residue" description="Phosphoserine" evidence="12">
    <location>
        <position position="196"/>
    </location>
</feature>
<feature type="glycosylation site" description="N-linked (GlcNAc...) asparagine" evidence="4">
    <location>
        <position position="78"/>
    </location>
</feature>
<feature type="disulfide bond" evidence="2">
    <location>
        <begin position="55"/>
        <end position="304"/>
    </location>
</feature>
<feature type="disulfide bond" evidence="2">
    <location>
        <begin position="109"/>
        <end position="289"/>
    </location>
</feature>
<feature type="splice variant" id="VSP_055395" description="In isoform 2." evidence="9">
    <location>
        <begin position="169"/>
        <end position="180"/>
    </location>
</feature>
<reference key="1">
    <citation type="submission" date="2005-02" db="EMBL/GenBank/DDBJ databases">
        <title>Prediction of the coding sequences of mouse homologues of KIAA gene. The complete nucleotide sequences of mouse KIAA-homologous cDNAs identified by screening of terminal sequences of cDNA clones randomly sampled from size-fractionated libraries.</title>
        <authorList>
            <person name="Okazaki N."/>
            <person name="Kikuno R.F."/>
            <person name="Ohara R."/>
            <person name="Inamoto S."/>
            <person name="Nagase T."/>
            <person name="Ohara O."/>
            <person name="Koga H."/>
        </authorList>
    </citation>
    <scope>NUCLEOTIDE SEQUENCE [LARGE SCALE MRNA] (ISOFORM 2)</scope>
    <source>
        <tissue>Fetal brain</tissue>
    </source>
</reference>
<reference key="2">
    <citation type="journal article" date="2009" name="PLoS Biol.">
        <title>Lineage-specific biology revealed by a finished genome assembly of the mouse.</title>
        <authorList>
            <person name="Church D.M."/>
            <person name="Goodstadt L."/>
            <person name="Hillier L.W."/>
            <person name="Zody M.C."/>
            <person name="Goldstein S."/>
            <person name="She X."/>
            <person name="Bult C.J."/>
            <person name="Agarwala R."/>
            <person name="Cherry J.L."/>
            <person name="DiCuccio M."/>
            <person name="Hlavina W."/>
            <person name="Kapustin Y."/>
            <person name="Meric P."/>
            <person name="Maglott D."/>
            <person name="Birtle Z."/>
            <person name="Marques A.C."/>
            <person name="Graves T."/>
            <person name="Zhou S."/>
            <person name="Teague B."/>
            <person name="Potamousis K."/>
            <person name="Churas C."/>
            <person name="Place M."/>
            <person name="Herschleb J."/>
            <person name="Runnheim R."/>
            <person name="Forrest D."/>
            <person name="Amos-Landgraf J."/>
            <person name="Schwartz D.C."/>
            <person name="Cheng Z."/>
            <person name="Lindblad-Toh K."/>
            <person name="Eichler E.E."/>
            <person name="Ponting C.P."/>
        </authorList>
    </citation>
    <scope>NUCLEOTIDE SEQUENCE [LARGE SCALE GENOMIC DNA]</scope>
    <source>
        <strain>C57BL/6J</strain>
    </source>
</reference>
<reference key="3">
    <citation type="submission" date="2005-07" db="EMBL/GenBank/DDBJ databases">
        <authorList>
            <person name="Mural R.J."/>
            <person name="Adams M.D."/>
            <person name="Myers E.W."/>
            <person name="Smith H.O."/>
            <person name="Venter J.C."/>
        </authorList>
    </citation>
    <scope>NUCLEOTIDE SEQUENCE [LARGE SCALE GENOMIC DNA]</scope>
</reference>
<reference key="4">
    <citation type="journal article" date="2004" name="Genome Res.">
        <title>The status, quality, and expansion of the NIH full-length cDNA project: the Mammalian Gene Collection (MGC).</title>
        <authorList>
            <consortium name="The MGC Project Team"/>
        </authorList>
    </citation>
    <scope>NUCLEOTIDE SEQUENCE [LARGE SCALE MRNA] (ISOFORM 1)</scope>
</reference>
<reference key="5">
    <citation type="journal article" date="2010" name="Cell">
        <title>A tissue-specific atlas of mouse protein phosphorylation and expression.</title>
        <authorList>
            <person name="Huttlin E.L."/>
            <person name="Jedrychowski M.P."/>
            <person name="Elias J.E."/>
            <person name="Goswami T."/>
            <person name="Rad R."/>
            <person name="Beausoleil S.A."/>
            <person name="Villen J."/>
            <person name="Haas W."/>
            <person name="Sowa M.E."/>
            <person name="Gygi S.P."/>
        </authorList>
    </citation>
    <scope>PHOSPHORYLATION [LARGE SCALE ANALYSIS] AT SER-186 AND SER-196</scope>
    <scope>IDENTIFICATION BY MASS SPECTROMETRY [LARGE SCALE ANALYSIS]</scope>
    <source>
        <tissue>Brain</tissue>
        <tissue>Brown adipose tissue</tissue>
    </source>
</reference>
<reference key="6">
    <citation type="journal article" date="2014" name="J. Biol. Chem.">
        <title>The protein synthesis inhibitor blasticidin S enters mammalian cells via leucine-rich repeat-containing protein 8D.</title>
        <authorList>
            <person name="Lee C.C."/>
            <person name="Freinkman E."/>
            <person name="Sabatini D.M."/>
            <person name="Ploegh H.L."/>
        </authorList>
    </citation>
    <scope>SUBUNIT</scope>
    <scope>INTERACTION WITH LRRC8A; LRRC8C AND LRRC8D</scope>
</reference>
<reference key="7">
    <citation type="journal article" date="2023" name="Nat. Struct. Mol. Biol.">
        <title>Structure of a volume-regulated heteromeric LRRC8A/C channel.</title>
        <authorList>
            <person name="Rutz S."/>
            <person name="Deneka D."/>
            <person name="Dittmann A."/>
            <person name="Sawicka M."/>
            <person name="Dutzler R."/>
        </authorList>
    </citation>
    <scope>FUNCTION</scope>
    <scope>TRANSPORTER ACTIVITY</scope>
    <scope>SUBUNIT</scope>
</reference>
<proteinExistence type="evidence at protein level"/>
<name>LRC8B_MOUSE</name>
<accession>Q5DU41</accession>
<accession>B2RSI6</accession>
<sequence>MITLTELKCLADAQSSYHILKPWWDVFWYYITLIMLLVAVLAGALQLTQSRVLCCLPCKVEFDNQCAVPWDLLKGSENASSNSGLLLPLPLRIQNDLHRQQYSYIDAVCYEKQLHWFAKFFPYLVLLHTLIFAACSNFWLHYPSTSSRLEHFVSILHKCFDSPWTTRALSETVAEQSVRPLKLSKSKTLLSTSGGSADIDASKQSLPYPQPGLESPGIESPTSSVLDKKEGEQAKAIFEKVKRFRLHVEQRDIIYRVYLKQIIVKVILFVLIITYVPYFLSYITLEIDCSIDVQAFTGYKRYQCVYSLAEIFKVLASFYVILVMLYGLTSSYSLWWMLRSSLKQYSFEALREKSNYSDIPDVKNDFAFILHLADQYDPLYSKRFSIFLSEVSENKLKQINLNNEWTVERLKSKLVKNSQDKVELHLFMLNGLPDNVFELTEMEVLSLELIPEVKLPAAVAQLVNLRELHVYHSSLVVDHPALAFLEENLRILRLKFTEMGKIPRWVFHLKNLKELYLSGCVLPEQLSSLHLEGFQDLKNLRTLYLKSSLSRIPQVVTDLLPSLQKLSLDNEGSKLVVLNNLKKMVNLKSLELLSCDLERIPHSIFSLNNLHELDLKENNLKTVEEIISFQHLPSLSCLKLWHNNIAYIPAQIGALSNLEQLFLGHNNIESLPLQLFLCTKLHYLDLSYNHLTFIPEEIQYLTNLQYFAVTNNNIEMLPDGLFQCKKLQCLLLGRNSLTDLSPLVGELSNLTHLELTGNYLETLPVELEGCQSLKRSCLIVEDSLLNSLPLPVAERLQTCLDKC</sequence>
<evidence type="ECO:0000250" key="1">
    <source>
        <dbReference type="UniProtKB" id="Q6P9F7"/>
    </source>
</evidence>
<evidence type="ECO:0000250" key="2">
    <source>
        <dbReference type="UniProtKB" id="Q80WG5"/>
    </source>
</evidence>
<evidence type="ECO:0000250" key="3">
    <source>
        <dbReference type="UniProtKB" id="Q8IWT6"/>
    </source>
</evidence>
<evidence type="ECO:0000255" key="4"/>
<evidence type="ECO:0000269" key="5">
    <source>
    </source>
</evidence>
<evidence type="ECO:0000269" key="6">
    <source>
    </source>
</evidence>
<evidence type="ECO:0000303" key="7">
    <source>
    </source>
</evidence>
<evidence type="ECO:0000303" key="8">
    <source>
    </source>
</evidence>
<evidence type="ECO:0000303" key="9">
    <source ref="1"/>
</evidence>
<evidence type="ECO:0000305" key="10"/>
<evidence type="ECO:0000312" key="11">
    <source>
        <dbReference type="MGI" id="MGI:2141353"/>
    </source>
</evidence>
<evidence type="ECO:0007744" key="12">
    <source>
    </source>
</evidence>
<organism>
    <name type="scientific">Mus musculus</name>
    <name type="common">Mouse</name>
    <dbReference type="NCBI Taxonomy" id="10090"/>
    <lineage>
        <taxon>Eukaryota</taxon>
        <taxon>Metazoa</taxon>
        <taxon>Chordata</taxon>
        <taxon>Craniata</taxon>
        <taxon>Vertebrata</taxon>
        <taxon>Euteleostomi</taxon>
        <taxon>Mammalia</taxon>
        <taxon>Eutheria</taxon>
        <taxon>Euarchontoglires</taxon>
        <taxon>Glires</taxon>
        <taxon>Rodentia</taxon>
        <taxon>Myomorpha</taxon>
        <taxon>Muroidea</taxon>
        <taxon>Muridae</taxon>
        <taxon>Murinae</taxon>
        <taxon>Mus</taxon>
        <taxon>Mus</taxon>
    </lineage>
</organism>
<dbReference type="EMBL" id="AK220329">
    <property type="protein sequence ID" value="BAD90398.1"/>
    <property type="status" value="ALT_INIT"/>
    <property type="molecule type" value="mRNA"/>
</dbReference>
<dbReference type="EMBL" id="AC113980">
    <property type="status" value="NOT_ANNOTATED_CDS"/>
    <property type="molecule type" value="Genomic_DNA"/>
</dbReference>
<dbReference type="EMBL" id="AC138265">
    <property type="status" value="NOT_ANNOTATED_CDS"/>
    <property type="molecule type" value="Genomic_DNA"/>
</dbReference>
<dbReference type="EMBL" id="CH466529">
    <property type="protein sequence ID" value="EDL20199.1"/>
    <property type="molecule type" value="Genomic_DNA"/>
</dbReference>
<dbReference type="EMBL" id="BC138877">
    <property type="protein sequence ID" value="AAI38878.1"/>
    <property type="molecule type" value="mRNA"/>
</dbReference>
<dbReference type="EMBL" id="BC138878">
    <property type="protein sequence ID" value="AAI38879.1"/>
    <property type="molecule type" value="mRNA"/>
</dbReference>
<dbReference type="CCDS" id="CCDS39193.1">
    <molecule id="Q5DU41-1"/>
</dbReference>
<dbReference type="RefSeq" id="NP_001028722.1">
    <molecule id="Q5DU41-1"/>
    <property type="nucleotide sequence ID" value="NM_001033550.4"/>
</dbReference>
<dbReference type="RefSeq" id="XP_011247810.1">
    <molecule id="Q5DU41-1"/>
    <property type="nucleotide sequence ID" value="XM_011249508.3"/>
</dbReference>
<dbReference type="RefSeq" id="XP_030110511.1">
    <molecule id="Q5DU41-1"/>
    <property type="nucleotide sequence ID" value="XM_030254651.2"/>
</dbReference>
<dbReference type="RefSeq" id="XP_030110512.1">
    <molecule id="Q5DU41-1"/>
    <property type="nucleotide sequence ID" value="XM_030254652.1"/>
</dbReference>
<dbReference type="RefSeq" id="XP_030110513.1">
    <molecule id="Q5DU41-1"/>
    <property type="nucleotide sequence ID" value="XM_030254653.1"/>
</dbReference>
<dbReference type="SMR" id="Q5DU41"/>
<dbReference type="BioGRID" id="241505">
    <property type="interactions" value="2"/>
</dbReference>
<dbReference type="FunCoup" id="Q5DU41">
    <property type="interactions" value="379"/>
</dbReference>
<dbReference type="IntAct" id="Q5DU41">
    <property type="interactions" value="1"/>
</dbReference>
<dbReference type="MINT" id="Q5DU41"/>
<dbReference type="STRING" id="10090.ENSMUSP00000108327"/>
<dbReference type="GlyCosmos" id="Q5DU41">
    <property type="glycosylation" value="1 site, No reported glycans"/>
</dbReference>
<dbReference type="GlyGen" id="Q5DU41">
    <property type="glycosylation" value="2 sites, 1 N-linked glycan (1 site), 1 O-linked glycan (1 site)"/>
</dbReference>
<dbReference type="iPTMnet" id="Q5DU41"/>
<dbReference type="PhosphoSitePlus" id="Q5DU41"/>
<dbReference type="SwissPalm" id="Q5DU41"/>
<dbReference type="PaxDb" id="10090-ENSMUSP00000108327"/>
<dbReference type="PeptideAtlas" id="Q5DU41"/>
<dbReference type="ProteomicsDB" id="252513">
    <molecule id="Q5DU41-1"/>
</dbReference>
<dbReference type="ProteomicsDB" id="252514">
    <molecule id="Q5DU41-2"/>
</dbReference>
<dbReference type="Antibodypedia" id="19852">
    <property type="antibodies" value="117 antibodies from 14 providers"/>
</dbReference>
<dbReference type="DNASU" id="433926"/>
<dbReference type="Ensembl" id="ENSMUST00000112707.3">
    <molecule id="Q5DU41-1"/>
    <property type="protein sequence ID" value="ENSMUSP00000108327.2"/>
    <property type="gene ID" value="ENSMUSG00000070639.6"/>
</dbReference>
<dbReference type="GeneID" id="433926"/>
<dbReference type="KEGG" id="mmu:433926"/>
<dbReference type="UCSC" id="uc008yle.1">
    <molecule id="Q5DU41-1"/>
    <property type="organism name" value="mouse"/>
</dbReference>
<dbReference type="AGR" id="MGI:2141353"/>
<dbReference type="CTD" id="23507"/>
<dbReference type="MGI" id="MGI:2141353">
    <property type="gene designation" value="Lrrc8b"/>
</dbReference>
<dbReference type="VEuPathDB" id="HostDB:ENSMUSG00000070639"/>
<dbReference type="eggNOG" id="KOG0619">
    <property type="taxonomic scope" value="Eukaryota"/>
</dbReference>
<dbReference type="GeneTree" id="ENSGT00940000160703"/>
<dbReference type="HOGENOM" id="CLU_019019_0_0_1"/>
<dbReference type="InParanoid" id="Q5DU41"/>
<dbReference type="OMA" id="WYYLTLI"/>
<dbReference type="OrthoDB" id="1394818at2759"/>
<dbReference type="PhylomeDB" id="Q5DU41"/>
<dbReference type="TreeFam" id="TF331443"/>
<dbReference type="Reactome" id="R-MMU-5223345">
    <property type="pathway name" value="Miscellaneous transport and binding events"/>
</dbReference>
<dbReference type="BioGRID-ORCS" id="433926">
    <property type="hits" value="0 hits in 76 CRISPR screens"/>
</dbReference>
<dbReference type="ChiTaRS" id="Lrrc8b">
    <property type="organism name" value="mouse"/>
</dbReference>
<dbReference type="PRO" id="PR:Q5DU41"/>
<dbReference type="Proteomes" id="UP000000589">
    <property type="component" value="Chromosome 5"/>
</dbReference>
<dbReference type="RNAct" id="Q5DU41">
    <property type="molecule type" value="protein"/>
</dbReference>
<dbReference type="Bgee" id="ENSMUSG00000070639">
    <property type="expression patterns" value="Expressed in dorsal pancreas and 215 other cell types or tissues"/>
</dbReference>
<dbReference type="GO" id="GO:0005789">
    <property type="term" value="C:endoplasmic reticulum membrane"/>
    <property type="evidence" value="ECO:0007669"/>
    <property type="project" value="UniProtKB-SubCell"/>
</dbReference>
<dbReference type="GO" id="GO:0034702">
    <property type="term" value="C:monoatomic ion channel complex"/>
    <property type="evidence" value="ECO:0000250"/>
    <property type="project" value="UniProtKB"/>
</dbReference>
<dbReference type="GO" id="GO:0005886">
    <property type="term" value="C:plasma membrane"/>
    <property type="evidence" value="ECO:0000250"/>
    <property type="project" value="UniProtKB"/>
</dbReference>
<dbReference type="GO" id="GO:0005225">
    <property type="term" value="F:volume-sensitive anion channel activity"/>
    <property type="evidence" value="ECO:0007669"/>
    <property type="project" value="Ensembl"/>
</dbReference>
<dbReference type="GO" id="GO:0098656">
    <property type="term" value="P:monoatomic anion transmembrane transport"/>
    <property type="evidence" value="ECO:0000250"/>
    <property type="project" value="UniProtKB"/>
</dbReference>
<dbReference type="FunFam" id="3.80.10.10:FF:000089">
    <property type="entry name" value="volume-regulated anion channel subunit LRRC8B"/>
    <property type="match status" value="1"/>
</dbReference>
<dbReference type="FunFam" id="3.80.10.10:FF:000424">
    <property type="entry name" value="Volume-regulated anion channel subunit LRRC8E"/>
    <property type="match status" value="1"/>
</dbReference>
<dbReference type="Gene3D" id="3.80.10.10">
    <property type="entry name" value="Ribonuclease Inhibitor"/>
    <property type="match status" value="2"/>
</dbReference>
<dbReference type="InterPro" id="IPR001611">
    <property type="entry name" value="Leu-rich_rpt"/>
</dbReference>
<dbReference type="InterPro" id="IPR003591">
    <property type="entry name" value="Leu-rich_rpt_typical-subtyp"/>
</dbReference>
<dbReference type="InterPro" id="IPR032675">
    <property type="entry name" value="LRR_dom_sf"/>
</dbReference>
<dbReference type="InterPro" id="IPR021040">
    <property type="entry name" value="LRRC8_Pannexin-like"/>
</dbReference>
<dbReference type="InterPro" id="IPR050333">
    <property type="entry name" value="SLRP"/>
</dbReference>
<dbReference type="PANTHER" id="PTHR45712">
    <property type="entry name" value="AGAP008170-PA"/>
    <property type="match status" value="1"/>
</dbReference>
<dbReference type="PANTHER" id="PTHR45712:SF22">
    <property type="entry name" value="INSULIN-LIKE GROWTH FACTOR-BINDING PROTEIN COMPLEX ACID LABILE SUBUNIT"/>
    <property type="match status" value="1"/>
</dbReference>
<dbReference type="Pfam" id="PF13855">
    <property type="entry name" value="LRR_8"/>
    <property type="match status" value="2"/>
</dbReference>
<dbReference type="Pfam" id="PF12534">
    <property type="entry name" value="Pannexin_like"/>
    <property type="match status" value="1"/>
</dbReference>
<dbReference type="SMART" id="SM00369">
    <property type="entry name" value="LRR_TYP"/>
    <property type="match status" value="7"/>
</dbReference>
<dbReference type="SUPFAM" id="SSF52058">
    <property type="entry name" value="L domain-like"/>
    <property type="match status" value="1"/>
</dbReference>
<dbReference type="SUPFAM" id="SSF52075">
    <property type="entry name" value="Outer arm dynein light chain 1"/>
    <property type="match status" value="1"/>
</dbReference>
<dbReference type="PROSITE" id="PS51450">
    <property type="entry name" value="LRR"/>
    <property type="match status" value="10"/>
</dbReference>
<keyword id="KW-0025">Alternative splicing</keyword>
<keyword id="KW-1003">Cell membrane</keyword>
<keyword id="KW-1015">Disulfide bond</keyword>
<keyword id="KW-0256">Endoplasmic reticulum</keyword>
<keyword id="KW-0325">Glycoprotein</keyword>
<keyword id="KW-0407">Ion channel</keyword>
<keyword id="KW-0406">Ion transport</keyword>
<keyword id="KW-0433">Leucine-rich repeat</keyword>
<keyword id="KW-0472">Membrane</keyword>
<keyword id="KW-0597">Phosphoprotein</keyword>
<keyword id="KW-1185">Reference proteome</keyword>
<keyword id="KW-0677">Repeat</keyword>
<keyword id="KW-0812">Transmembrane</keyword>
<keyword id="KW-1133">Transmembrane helix</keyword>
<keyword id="KW-0813">Transport</keyword>
<comment type="function">
    <text evidence="1 6">Non-essential component of the volume-regulated anion channel (VRAC, also named VSOAC channel), an anion channel required to maintain a constant cell volume in response to extracellular or intracellular osmotic changes (PubMed:36522427). The VRAC channel conducts iodide better than chloride and can also conduct organic osmolytes like taurine (By similarity). Channel activity requires LRRC8A plus at least one other family member (LRRC8B, LRRC8C, LRRC8D or LRRC8E); channel characteristics depend on the precise subunit composition (PubMed:36522427).</text>
</comment>
<comment type="catalytic activity">
    <reaction evidence="6">
        <text>chloride(in) = chloride(out)</text>
        <dbReference type="Rhea" id="RHEA:29823"/>
        <dbReference type="ChEBI" id="CHEBI:17996"/>
    </reaction>
</comment>
<comment type="catalytic activity">
    <reaction evidence="1">
        <text>iodide(out) = iodide(in)</text>
        <dbReference type="Rhea" id="RHEA:66324"/>
        <dbReference type="ChEBI" id="CHEBI:16382"/>
    </reaction>
</comment>
<comment type="catalytic activity">
    <reaction evidence="1">
        <text>taurine(out) = taurine(in)</text>
        <dbReference type="Rhea" id="RHEA:66328"/>
        <dbReference type="ChEBI" id="CHEBI:507393"/>
    </reaction>
</comment>
<comment type="subunit">
    <text evidence="5 6">Heterohexamer; oligomerizes with other LRRC8 proteins (LRRC8A, LRRC8C, LRRC8D and/or LRRC8E) to form a heterohexamer (PubMed:36522427, PubMed:24782309). In vivo, the subunit composition may depend primarily on expression levels, and heterooligomeric channels containing various proportions of the different LRRC8 proteins may coexist (PubMed:36522427).</text>
</comment>
<comment type="subcellular location">
    <subcellularLocation>
        <location evidence="1">Cell membrane</location>
        <topology evidence="1">Multi-pass membrane protein</topology>
    </subcellularLocation>
    <subcellularLocation>
        <location evidence="1">Endoplasmic reticulum membrane</location>
    </subcellularLocation>
    <text evidence="1">In the absence of LRRC8A, resides primarily in a cytoplasmic compartment, probably the endoplasmic reticulum. Requires LRRC8A for expression at the cell membrane.</text>
</comment>
<comment type="alternative products">
    <event type="alternative splicing"/>
    <isoform>
        <id>Q5DU41-1</id>
        <name>1</name>
        <sequence type="displayed"/>
    </isoform>
    <isoform>
        <id>Q5DU41-2</id>
        <name>2</name>
        <sequence type="described" ref="VSP_055395"/>
    </isoform>
</comment>
<comment type="domain">
    <text evidence="3">The volume-regulated anion channel (VRAC) channel forms a trimer of dimers, with symmetry mismatch between the pore-forming domain and the cytosolic LRR repeats, a topology similar to gap junction proteins.</text>
</comment>
<comment type="similarity">
    <text evidence="10">Belongs to the LRRC8 family.</text>
</comment>
<comment type="sequence caution" evidence="10">
    <conflict type="erroneous initiation">
        <sequence resource="EMBL-CDS" id="BAD90398"/>
    </conflict>
</comment>